<protein>
    <recommendedName>
        <fullName evidence="1">Phosphoribosylformylglycinamidine cyclo-ligase</fullName>
        <ecNumber evidence="1">6.3.3.1</ecNumber>
    </recommendedName>
    <alternativeName>
        <fullName evidence="1">AIR synthase</fullName>
    </alternativeName>
    <alternativeName>
        <fullName evidence="1">AIRS</fullName>
    </alternativeName>
    <alternativeName>
        <fullName evidence="1">Phosphoribosyl-aminoimidazole synthetase</fullName>
    </alternativeName>
</protein>
<gene>
    <name evidence="1" type="primary">purM</name>
    <name type="ordered locus">BMA10247_2195</name>
</gene>
<organism>
    <name type="scientific">Burkholderia mallei (strain NCTC 10247)</name>
    <dbReference type="NCBI Taxonomy" id="320389"/>
    <lineage>
        <taxon>Bacteria</taxon>
        <taxon>Pseudomonadati</taxon>
        <taxon>Pseudomonadota</taxon>
        <taxon>Betaproteobacteria</taxon>
        <taxon>Burkholderiales</taxon>
        <taxon>Burkholderiaceae</taxon>
        <taxon>Burkholderia</taxon>
        <taxon>pseudomallei group</taxon>
    </lineage>
</organism>
<name>PUR5_BURM7</name>
<comment type="catalytic activity">
    <reaction evidence="1">
        <text>2-formamido-N(1)-(5-O-phospho-beta-D-ribosyl)acetamidine + ATP = 5-amino-1-(5-phospho-beta-D-ribosyl)imidazole + ADP + phosphate + H(+)</text>
        <dbReference type="Rhea" id="RHEA:23032"/>
        <dbReference type="ChEBI" id="CHEBI:15378"/>
        <dbReference type="ChEBI" id="CHEBI:30616"/>
        <dbReference type="ChEBI" id="CHEBI:43474"/>
        <dbReference type="ChEBI" id="CHEBI:137981"/>
        <dbReference type="ChEBI" id="CHEBI:147287"/>
        <dbReference type="ChEBI" id="CHEBI:456216"/>
        <dbReference type="EC" id="6.3.3.1"/>
    </reaction>
</comment>
<comment type="pathway">
    <text evidence="1">Purine metabolism; IMP biosynthesis via de novo pathway; 5-amino-1-(5-phospho-D-ribosyl)imidazole from N(2)-formyl-N(1)-(5-phospho-D-ribosyl)glycinamide: step 2/2.</text>
</comment>
<comment type="subcellular location">
    <subcellularLocation>
        <location evidence="1">Cytoplasm</location>
    </subcellularLocation>
</comment>
<comment type="similarity">
    <text evidence="1">Belongs to the AIR synthase family.</text>
</comment>
<proteinExistence type="inferred from homology"/>
<accession>A3MN88</accession>
<sequence>MNPPKSAPDAQGLSYRDAGVDIDAGDALVDKIKPFAKKTLRDGVLGGIGGFGALFEVPKKYREPVLVSGTDGVGTKLKLAFHLNKHDTVGQDLVAMSVNDILVQGAEPLFFLDYFACGKLDVETAATVVKGIATGCELAGCALIGGETAEMPGMYPDGEYDLAGFAVGAVEKSKIIDGSTIAEGDVVLGLASSGIHSNGFSLVRKIIERANPDLSADFHGRSLADALMAPTRIYVKPLLALMEKIAVKGMAHITGGGLVENIPRVLRDGLTAELDQHAWPLPPLFQWLQQHGGVADAEMHRVFNCGIGMAVIVSAADADDALRQLADAGEQVWKIGTVRASREGEAQTVVV</sequence>
<evidence type="ECO:0000255" key="1">
    <source>
        <dbReference type="HAMAP-Rule" id="MF_00741"/>
    </source>
</evidence>
<dbReference type="EC" id="6.3.3.1" evidence="1"/>
<dbReference type="EMBL" id="CP000548">
    <property type="protein sequence ID" value="ABO05033.1"/>
    <property type="molecule type" value="Genomic_DNA"/>
</dbReference>
<dbReference type="RefSeq" id="WP_004194386.1">
    <property type="nucleotide sequence ID" value="NZ_CP007802.1"/>
</dbReference>
<dbReference type="SMR" id="A3MN88"/>
<dbReference type="GeneID" id="93061406"/>
<dbReference type="KEGG" id="bmaz:BM44_1045"/>
<dbReference type="KEGG" id="bmn:BMA10247_2195"/>
<dbReference type="PATRIC" id="fig|320389.8.peg.1167"/>
<dbReference type="UniPathway" id="UPA00074">
    <property type="reaction ID" value="UER00129"/>
</dbReference>
<dbReference type="GO" id="GO:0005829">
    <property type="term" value="C:cytosol"/>
    <property type="evidence" value="ECO:0007669"/>
    <property type="project" value="TreeGrafter"/>
</dbReference>
<dbReference type="GO" id="GO:0005524">
    <property type="term" value="F:ATP binding"/>
    <property type="evidence" value="ECO:0007669"/>
    <property type="project" value="UniProtKB-KW"/>
</dbReference>
<dbReference type="GO" id="GO:0004637">
    <property type="term" value="F:phosphoribosylamine-glycine ligase activity"/>
    <property type="evidence" value="ECO:0007669"/>
    <property type="project" value="TreeGrafter"/>
</dbReference>
<dbReference type="GO" id="GO:0004641">
    <property type="term" value="F:phosphoribosylformylglycinamidine cyclo-ligase activity"/>
    <property type="evidence" value="ECO:0007669"/>
    <property type="project" value="UniProtKB-UniRule"/>
</dbReference>
<dbReference type="GO" id="GO:0006189">
    <property type="term" value="P:'de novo' IMP biosynthetic process"/>
    <property type="evidence" value="ECO:0007669"/>
    <property type="project" value="UniProtKB-UniRule"/>
</dbReference>
<dbReference type="GO" id="GO:0046084">
    <property type="term" value="P:adenine biosynthetic process"/>
    <property type="evidence" value="ECO:0007669"/>
    <property type="project" value="TreeGrafter"/>
</dbReference>
<dbReference type="CDD" id="cd02196">
    <property type="entry name" value="PurM"/>
    <property type="match status" value="1"/>
</dbReference>
<dbReference type="FunFam" id="3.30.1330.10:FF:000001">
    <property type="entry name" value="Phosphoribosylformylglycinamidine cyclo-ligase"/>
    <property type="match status" value="1"/>
</dbReference>
<dbReference type="FunFam" id="3.90.650.10:FF:000001">
    <property type="entry name" value="Phosphoribosylformylglycinamidine cyclo-ligase"/>
    <property type="match status" value="1"/>
</dbReference>
<dbReference type="Gene3D" id="3.90.650.10">
    <property type="entry name" value="PurM-like C-terminal domain"/>
    <property type="match status" value="1"/>
</dbReference>
<dbReference type="Gene3D" id="3.30.1330.10">
    <property type="entry name" value="PurM-like, N-terminal domain"/>
    <property type="match status" value="1"/>
</dbReference>
<dbReference type="HAMAP" id="MF_00741">
    <property type="entry name" value="AIRS"/>
    <property type="match status" value="1"/>
</dbReference>
<dbReference type="InterPro" id="IPR010918">
    <property type="entry name" value="PurM-like_C_dom"/>
</dbReference>
<dbReference type="InterPro" id="IPR036676">
    <property type="entry name" value="PurM-like_C_sf"/>
</dbReference>
<dbReference type="InterPro" id="IPR016188">
    <property type="entry name" value="PurM-like_N"/>
</dbReference>
<dbReference type="InterPro" id="IPR036921">
    <property type="entry name" value="PurM-like_N_sf"/>
</dbReference>
<dbReference type="InterPro" id="IPR004733">
    <property type="entry name" value="PurM_cligase"/>
</dbReference>
<dbReference type="NCBIfam" id="TIGR00878">
    <property type="entry name" value="purM"/>
    <property type="match status" value="1"/>
</dbReference>
<dbReference type="PANTHER" id="PTHR10520:SF12">
    <property type="entry name" value="TRIFUNCTIONAL PURINE BIOSYNTHETIC PROTEIN ADENOSINE-3"/>
    <property type="match status" value="1"/>
</dbReference>
<dbReference type="PANTHER" id="PTHR10520">
    <property type="entry name" value="TRIFUNCTIONAL PURINE BIOSYNTHETIC PROTEIN ADENOSINE-3-RELATED"/>
    <property type="match status" value="1"/>
</dbReference>
<dbReference type="Pfam" id="PF00586">
    <property type="entry name" value="AIRS"/>
    <property type="match status" value="1"/>
</dbReference>
<dbReference type="Pfam" id="PF02769">
    <property type="entry name" value="AIRS_C"/>
    <property type="match status" value="1"/>
</dbReference>
<dbReference type="SUPFAM" id="SSF56042">
    <property type="entry name" value="PurM C-terminal domain-like"/>
    <property type="match status" value="1"/>
</dbReference>
<dbReference type="SUPFAM" id="SSF55326">
    <property type="entry name" value="PurM N-terminal domain-like"/>
    <property type="match status" value="1"/>
</dbReference>
<keyword id="KW-0067">ATP-binding</keyword>
<keyword id="KW-0963">Cytoplasm</keyword>
<keyword id="KW-0436">Ligase</keyword>
<keyword id="KW-0547">Nucleotide-binding</keyword>
<keyword id="KW-0658">Purine biosynthesis</keyword>
<reference key="1">
    <citation type="journal article" date="2010" name="Genome Biol. Evol.">
        <title>Continuing evolution of Burkholderia mallei through genome reduction and large-scale rearrangements.</title>
        <authorList>
            <person name="Losada L."/>
            <person name="Ronning C.M."/>
            <person name="DeShazer D."/>
            <person name="Woods D."/>
            <person name="Fedorova N."/>
            <person name="Kim H.S."/>
            <person name="Shabalina S.A."/>
            <person name="Pearson T.R."/>
            <person name="Brinkac L."/>
            <person name="Tan P."/>
            <person name="Nandi T."/>
            <person name="Crabtree J."/>
            <person name="Badger J."/>
            <person name="Beckstrom-Sternberg S."/>
            <person name="Saqib M."/>
            <person name="Schutzer S.E."/>
            <person name="Keim P."/>
            <person name="Nierman W.C."/>
        </authorList>
    </citation>
    <scope>NUCLEOTIDE SEQUENCE [LARGE SCALE GENOMIC DNA]</scope>
    <source>
        <strain>NCTC 10247</strain>
    </source>
</reference>
<feature type="chain" id="PRO_1000046426" description="Phosphoribosylformylglycinamidine cyclo-ligase">
    <location>
        <begin position="1"/>
        <end position="351"/>
    </location>
</feature>